<organism>
    <name type="scientific">Arabidopsis thaliana</name>
    <name type="common">Mouse-ear cress</name>
    <dbReference type="NCBI Taxonomy" id="3702"/>
    <lineage>
        <taxon>Eukaryota</taxon>
        <taxon>Viridiplantae</taxon>
        <taxon>Streptophyta</taxon>
        <taxon>Embryophyta</taxon>
        <taxon>Tracheophyta</taxon>
        <taxon>Spermatophyta</taxon>
        <taxon>Magnoliopsida</taxon>
        <taxon>eudicotyledons</taxon>
        <taxon>Gunneridae</taxon>
        <taxon>Pentapetalae</taxon>
        <taxon>rosids</taxon>
        <taxon>malvids</taxon>
        <taxon>Brassicales</taxon>
        <taxon>Brassicaceae</taxon>
        <taxon>Camelineae</taxon>
        <taxon>Arabidopsis</taxon>
    </lineage>
</organism>
<protein>
    <recommendedName>
        <fullName>Pentatricopeptide repeat-containing protein At3g56030, mitochondrial</fullName>
    </recommendedName>
</protein>
<reference key="1">
    <citation type="journal article" date="2000" name="Nature">
        <title>Sequence and analysis of chromosome 3 of the plant Arabidopsis thaliana.</title>
        <authorList>
            <person name="Salanoubat M."/>
            <person name="Lemcke K."/>
            <person name="Rieger M."/>
            <person name="Ansorge W."/>
            <person name="Unseld M."/>
            <person name="Fartmann B."/>
            <person name="Valle G."/>
            <person name="Bloecker H."/>
            <person name="Perez-Alonso M."/>
            <person name="Obermaier B."/>
            <person name="Delseny M."/>
            <person name="Boutry M."/>
            <person name="Grivell L.A."/>
            <person name="Mache R."/>
            <person name="Puigdomenech P."/>
            <person name="De Simone V."/>
            <person name="Choisne N."/>
            <person name="Artiguenave F."/>
            <person name="Robert C."/>
            <person name="Brottier P."/>
            <person name="Wincker P."/>
            <person name="Cattolico L."/>
            <person name="Weissenbach J."/>
            <person name="Saurin W."/>
            <person name="Quetier F."/>
            <person name="Schaefer M."/>
            <person name="Mueller-Auer S."/>
            <person name="Gabel C."/>
            <person name="Fuchs M."/>
            <person name="Benes V."/>
            <person name="Wurmbach E."/>
            <person name="Drzonek H."/>
            <person name="Erfle H."/>
            <person name="Jordan N."/>
            <person name="Bangert S."/>
            <person name="Wiedelmann R."/>
            <person name="Kranz H."/>
            <person name="Voss H."/>
            <person name="Holland R."/>
            <person name="Brandt P."/>
            <person name="Nyakatura G."/>
            <person name="Vezzi A."/>
            <person name="D'Angelo M."/>
            <person name="Pallavicini A."/>
            <person name="Toppo S."/>
            <person name="Simionati B."/>
            <person name="Conrad A."/>
            <person name="Hornischer K."/>
            <person name="Kauer G."/>
            <person name="Loehnert T.-H."/>
            <person name="Nordsiek G."/>
            <person name="Reichelt J."/>
            <person name="Scharfe M."/>
            <person name="Schoen O."/>
            <person name="Bargues M."/>
            <person name="Terol J."/>
            <person name="Climent J."/>
            <person name="Navarro P."/>
            <person name="Collado C."/>
            <person name="Perez-Perez A."/>
            <person name="Ottenwaelder B."/>
            <person name="Duchemin D."/>
            <person name="Cooke R."/>
            <person name="Laudie M."/>
            <person name="Berger-Llauro C."/>
            <person name="Purnelle B."/>
            <person name="Masuy D."/>
            <person name="de Haan M."/>
            <person name="Maarse A.C."/>
            <person name="Alcaraz J.-P."/>
            <person name="Cottet A."/>
            <person name="Casacuberta E."/>
            <person name="Monfort A."/>
            <person name="Argiriou A."/>
            <person name="Flores M."/>
            <person name="Liguori R."/>
            <person name="Vitale D."/>
            <person name="Mannhaupt G."/>
            <person name="Haase D."/>
            <person name="Schoof H."/>
            <person name="Rudd S."/>
            <person name="Zaccaria P."/>
            <person name="Mewes H.-W."/>
            <person name="Mayer K.F.X."/>
            <person name="Kaul S."/>
            <person name="Town C.D."/>
            <person name="Koo H.L."/>
            <person name="Tallon L.J."/>
            <person name="Jenkins J."/>
            <person name="Rooney T."/>
            <person name="Rizzo M."/>
            <person name="Walts A."/>
            <person name="Utterback T."/>
            <person name="Fujii C.Y."/>
            <person name="Shea T.P."/>
            <person name="Creasy T.H."/>
            <person name="Haas B."/>
            <person name="Maiti R."/>
            <person name="Wu D."/>
            <person name="Peterson J."/>
            <person name="Van Aken S."/>
            <person name="Pai G."/>
            <person name="Militscher J."/>
            <person name="Sellers P."/>
            <person name="Gill J.E."/>
            <person name="Feldblyum T.V."/>
            <person name="Preuss D."/>
            <person name="Lin X."/>
            <person name="Nierman W.C."/>
            <person name="Salzberg S.L."/>
            <person name="White O."/>
            <person name="Venter J.C."/>
            <person name="Fraser C.M."/>
            <person name="Kaneko T."/>
            <person name="Nakamura Y."/>
            <person name="Sato S."/>
            <person name="Kato T."/>
            <person name="Asamizu E."/>
            <person name="Sasamoto S."/>
            <person name="Kimura T."/>
            <person name="Idesawa K."/>
            <person name="Kawashima K."/>
            <person name="Kishida Y."/>
            <person name="Kiyokawa C."/>
            <person name="Kohara M."/>
            <person name="Matsumoto M."/>
            <person name="Matsuno A."/>
            <person name="Muraki A."/>
            <person name="Nakayama S."/>
            <person name="Nakazaki N."/>
            <person name="Shinpo S."/>
            <person name="Takeuchi C."/>
            <person name="Wada T."/>
            <person name="Watanabe A."/>
            <person name="Yamada M."/>
            <person name="Yasuda M."/>
            <person name="Tabata S."/>
        </authorList>
    </citation>
    <scope>NUCLEOTIDE SEQUENCE [LARGE SCALE GENOMIC DNA]</scope>
    <source>
        <strain>cv. Columbia</strain>
    </source>
</reference>
<reference key="2">
    <citation type="journal article" date="2017" name="Plant J.">
        <title>Araport11: a complete reannotation of the Arabidopsis thaliana reference genome.</title>
        <authorList>
            <person name="Cheng C.Y."/>
            <person name="Krishnakumar V."/>
            <person name="Chan A.P."/>
            <person name="Thibaud-Nissen F."/>
            <person name="Schobel S."/>
            <person name="Town C.D."/>
        </authorList>
    </citation>
    <scope>GENOME REANNOTATION</scope>
    <source>
        <strain>cv. Columbia</strain>
    </source>
</reference>
<reference key="3">
    <citation type="journal article" date="2004" name="Genome Res.">
        <title>Whole genome sequence comparisons and 'full-length' cDNA sequences: a combined approach to evaluate and improve Arabidopsis genome annotation.</title>
        <authorList>
            <person name="Castelli V."/>
            <person name="Aury J.-M."/>
            <person name="Jaillon O."/>
            <person name="Wincker P."/>
            <person name="Clepet C."/>
            <person name="Menard M."/>
            <person name="Cruaud C."/>
            <person name="Quetier F."/>
            <person name="Scarpelli C."/>
            <person name="Schaechter V."/>
            <person name="Temple G."/>
            <person name="Caboche M."/>
            <person name="Weissenbach J."/>
            <person name="Salanoubat M."/>
        </authorList>
    </citation>
    <scope>NUCLEOTIDE SEQUENCE [LARGE SCALE MRNA]</scope>
    <source>
        <strain>cv. Columbia</strain>
    </source>
</reference>
<reference key="4">
    <citation type="journal article" date="2002" name="Science">
        <title>Functional annotation of a full-length Arabidopsis cDNA collection.</title>
        <authorList>
            <person name="Seki M."/>
            <person name="Narusaka M."/>
            <person name="Kamiya A."/>
            <person name="Ishida J."/>
            <person name="Satou M."/>
            <person name="Sakurai T."/>
            <person name="Nakajima M."/>
            <person name="Enju A."/>
            <person name="Akiyama K."/>
            <person name="Oono Y."/>
            <person name="Muramatsu M."/>
            <person name="Hayashizaki Y."/>
            <person name="Kawai J."/>
            <person name="Carninci P."/>
            <person name="Itoh M."/>
            <person name="Ishii Y."/>
            <person name="Arakawa T."/>
            <person name="Shibata K."/>
            <person name="Shinagawa A."/>
            <person name="Shinozaki K."/>
        </authorList>
    </citation>
    <scope>NUCLEOTIDE SEQUENCE [LARGE SCALE MRNA] OF 2-351</scope>
    <source>
        <strain>cv. Columbia</strain>
    </source>
</reference>
<reference key="5">
    <citation type="submission" date="2006-09" db="EMBL/GenBank/DDBJ databases">
        <title>Arabidopsis ORF clones.</title>
        <authorList>
            <person name="Quinitio C."/>
            <person name="Chen H."/>
            <person name="Kim C.J."/>
            <person name="Shinn P."/>
            <person name="Ecker J.R."/>
        </authorList>
    </citation>
    <scope>NUCLEOTIDE SEQUENCE [LARGE SCALE MRNA] OF 16-351</scope>
    <source>
        <strain>cv. Columbia</strain>
    </source>
</reference>
<reference key="6">
    <citation type="journal article" date="2004" name="Plant Cell">
        <title>Genome-wide analysis of Arabidopsis pentatricopeptide repeat proteins reveals their essential role in organelle biogenesis.</title>
        <authorList>
            <person name="Lurin C."/>
            <person name="Andres C."/>
            <person name="Aubourg S."/>
            <person name="Bellaoui M."/>
            <person name="Bitton F."/>
            <person name="Bruyere C."/>
            <person name="Caboche M."/>
            <person name="Debast C."/>
            <person name="Gualberto J."/>
            <person name="Hoffmann B."/>
            <person name="Lecharny A."/>
            <person name="Le Ret M."/>
            <person name="Martin-Magniette M.-L."/>
            <person name="Mireau H."/>
            <person name="Peeters N."/>
            <person name="Renou J.-P."/>
            <person name="Szurek B."/>
            <person name="Taconnat L."/>
            <person name="Small I."/>
        </authorList>
    </citation>
    <scope>GENE FAMILY</scope>
</reference>
<reference key="7">
    <citation type="journal article" date="2015" name="J. Exp. Bot.">
        <title>Identification of cleavage sites and substrate proteins for two mitochondrial intermediate peptidases in Arabidopsis thaliana.</title>
        <authorList>
            <person name="Carrie C."/>
            <person name="Venne A.S."/>
            <person name="Zahedi R.P."/>
            <person name="Soll J."/>
        </authorList>
    </citation>
    <scope>IDENTIFICATION BY MASS SPECTROMETRY</scope>
    <scope>CLEAVAGE OF TRANSIT PEPTIDE AFTER PHE-41</scope>
</reference>
<dbReference type="EMBL" id="AL163832">
    <property type="protein sequence ID" value="CAB87857.1"/>
    <property type="status" value="ALT_INIT"/>
    <property type="molecule type" value="Genomic_DNA"/>
</dbReference>
<dbReference type="EMBL" id="CP002686">
    <property type="protein sequence ID" value="AEE79468.1"/>
    <property type="molecule type" value="Genomic_DNA"/>
</dbReference>
<dbReference type="EMBL" id="BX822863">
    <property type="status" value="NOT_ANNOTATED_CDS"/>
    <property type="molecule type" value="mRNA"/>
</dbReference>
<dbReference type="EMBL" id="AK117553">
    <property type="protein sequence ID" value="BAC42214.1"/>
    <property type="status" value="ALT_INIT"/>
    <property type="molecule type" value="mRNA"/>
</dbReference>
<dbReference type="EMBL" id="BT028936">
    <property type="protein sequence ID" value="ABI49483.1"/>
    <property type="molecule type" value="mRNA"/>
</dbReference>
<dbReference type="PIR" id="T49215">
    <property type="entry name" value="T49215"/>
</dbReference>
<dbReference type="RefSeq" id="NP_191162.2">
    <property type="nucleotide sequence ID" value="NM_115461.3"/>
</dbReference>
<dbReference type="SMR" id="Q9LY43"/>
<dbReference type="BioGRID" id="10085">
    <property type="interactions" value="1"/>
</dbReference>
<dbReference type="FunCoup" id="Q9LY43">
    <property type="interactions" value="4"/>
</dbReference>
<dbReference type="IntAct" id="Q9LY43">
    <property type="interactions" value="2"/>
</dbReference>
<dbReference type="PaxDb" id="3702-AT3G56030.1"/>
<dbReference type="ProteomicsDB" id="249115"/>
<dbReference type="EnsemblPlants" id="AT3G56030.1">
    <property type="protein sequence ID" value="AT3G56030.1"/>
    <property type="gene ID" value="AT3G56030"/>
</dbReference>
<dbReference type="GeneID" id="824769"/>
<dbReference type="Gramene" id="AT3G56030.1">
    <property type="protein sequence ID" value="AT3G56030.1"/>
    <property type="gene ID" value="AT3G56030"/>
</dbReference>
<dbReference type="KEGG" id="ath:AT3G56030"/>
<dbReference type="Araport" id="AT3G56030"/>
<dbReference type="TAIR" id="AT3G56030"/>
<dbReference type="eggNOG" id="KOG4197">
    <property type="taxonomic scope" value="Eukaryota"/>
</dbReference>
<dbReference type="HOGENOM" id="CLU_832474_0_0_1"/>
<dbReference type="InParanoid" id="Q9LY43"/>
<dbReference type="OMA" id="GANACTF"/>
<dbReference type="PhylomeDB" id="Q9LY43"/>
<dbReference type="PRO" id="PR:Q9LY43"/>
<dbReference type="Proteomes" id="UP000006548">
    <property type="component" value="Chromosome 3"/>
</dbReference>
<dbReference type="ExpressionAtlas" id="Q9LY43">
    <property type="expression patterns" value="baseline and differential"/>
</dbReference>
<dbReference type="GO" id="GO:0005739">
    <property type="term" value="C:mitochondrion"/>
    <property type="evidence" value="ECO:0007669"/>
    <property type="project" value="UniProtKB-SubCell"/>
</dbReference>
<dbReference type="Gene3D" id="1.25.40.10">
    <property type="entry name" value="Tetratricopeptide repeat domain"/>
    <property type="match status" value="2"/>
</dbReference>
<dbReference type="InterPro" id="IPR002885">
    <property type="entry name" value="Pentatricopeptide_rpt"/>
</dbReference>
<dbReference type="InterPro" id="IPR011990">
    <property type="entry name" value="TPR-like_helical_dom_sf"/>
</dbReference>
<dbReference type="NCBIfam" id="TIGR00756">
    <property type="entry name" value="PPR"/>
    <property type="match status" value="3"/>
</dbReference>
<dbReference type="PANTHER" id="PTHR47932">
    <property type="entry name" value="ATPASE EXPRESSION PROTEIN 3"/>
    <property type="match status" value="1"/>
</dbReference>
<dbReference type="PANTHER" id="PTHR47932:SF8">
    <property type="entry name" value="PPR CONTAINING PLANT-LIKE PROTEIN"/>
    <property type="match status" value="1"/>
</dbReference>
<dbReference type="Pfam" id="PF01535">
    <property type="entry name" value="PPR"/>
    <property type="match status" value="3"/>
</dbReference>
<dbReference type="Pfam" id="PF12854">
    <property type="entry name" value="PPR_1"/>
    <property type="match status" value="1"/>
</dbReference>
<dbReference type="PROSITE" id="PS51375">
    <property type="entry name" value="PPR"/>
    <property type="match status" value="5"/>
</dbReference>
<keyword id="KW-0496">Mitochondrion</keyword>
<keyword id="KW-1185">Reference proteome</keyword>
<keyword id="KW-0677">Repeat</keyword>
<keyword id="KW-0809">Transit peptide</keyword>
<sequence>MFRLKPLISVDLNQTMSLLRRFVKEANNSRFLLQSISGRSFSTVNPNPTASPGRRTCVEFDNLIFKAGSSGDFEAVRRLLNSRVVNACFNTTATFKFLTNTDSYSSSLEDLRRILPQTDAGYTRKHSYETLIARLCKLGRIDDALVLINDMAIGEFGLSTCVFHPILNTLTKKNRIEEAWRVVELMRSHAIPVDVTSYNYFLTSHCYDGDVAEASRVLRKMEEEEEGVMSPDTRTYDALVLGACKSGRVEAAMAILRRMEEEGLSVLYATHAHVIGEMVESGYYALSVEFVMAYAGKDKRLDEENLGSLASKLIKRKRFKEAKMVLKEMSVRGLRMGDALREFHEKNVLQS</sequence>
<comment type="subcellular location">
    <subcellularLocation>
        <location evidence="3">Mitochondrion</location>
    </subcellularLocation>
</comment>
<comment type="similarity">
    <text evidence="2">Belongs to the PPR family. P subfamily.</text>
</comment>
<comment type="sequence caution" evidence="2">
    <conflict type="erroneous initiation">
        <sequence resource="EMBL-CDS" id="BAC42214"/>
    </conflict>
</comment>
<comment type="sequence caution" evidence="2">
    <conflict type="erroneous termination">
        <sequence resource="EMBL" id="BX822863"/>
    </conflict>
    <text>Truncated C-terminus.</text>
</comment>
<comment type="sequence caution" evidence="2">
    <conflict type="erroneous initiation">
        <sequence resource="EMBL-CDS" id="CAB87857"/>
    </conflict>
</comment>
<comment type="online information" name="Pentatricopeptide repeat proteins">
    <link uri="https://ppr.plantenergy.uwa.edu.au"/>
</comment>
<name>PP283_ARATH</name>
<proteinExistence type="evidence at protein level"/>
<evidence type="ECO:0000269" key="1">
    <source>
    </source>
</evidence>
<evidence type="ECO:0000305" key="2"/>
<evidence type="ECO:0000305" key="3">
    <source>
    </source>
</evidence>
<accession>Q9LY43</accession>
<gene>
    <name type="ordered locus">At3g56030</name>
    <name type="ORF">F27K19_210</name>
</gene>
<feature type="transit peptide" description="Mitochondrion" evidence="1">
    <location>
        <begin position="1"/>
        <end position="41"/>
    </location>
</feature>
<feature type="chain" id="PRO_0000356142" description="Pentatricopeptide repeat-containing protein At3g56030, mitochondrial">
    <location>
        <begin position="42"/>
        <end position="351"/>
    </location>
</feature>
<feature type="repeat" description="PPR 1">
    <location>
        <begin position="124"/>
        <end position="158"/>
    </location>
</feature>
<feature type="repeat" description="PPR 2">
    <location>
        <begin position="159"/>
        <end position="193"/>
    </location>
</feature>
<feature type="repeat" description="PPR 3">
    <location>
        <begin position="194"/>
        <end position="224"/>
    </location>
</feature>
<feature type="repeat" description="PPR 4">
    <location>
        <begin position="232"/>
        <end position="266"/>
    </location>
</feature>
<feature type="sequence conflict" description="In Ref. 3." evidence="2" ref="3">
    <original>M</original>
    <variation>L</variation>
    <location>
        <position position="229"/>
    </location>
</feature>
<feature type="sequence conflict" description="In Ref. 3." evidence="2" ref="3">
    <original>D</original>
    <variation>N</variation>
    <location>
        <position position="232"/>
    </location>
</feature>
<feature type="sequence conflict" description="In Ref. 3." evidence="2" ref="3">
    <original>S</original>
    <variation>I</variation>
    <location>
        <position position="287"/>
    </location>
</feature>